<dbReference type="EMBL" id="AE014297">
    <property type="protein sequence ID" value="AAF54990.2"/>
    <property type="molecule type" value="Genomic_DNA"/>
</dbReference>
<dbReference type="EMBL" id="AY069286">
    <property type="protein sequence ID" value="AAL39431.1"/>
    <property type="molecule type" value="mRNA"/>
</dbReference>
<dbReference type="RefSeq" id="NP_650317.3">
    <property type="nucleotide sequence ID" value="NM_142060.4"/>
</dbReference>
<dbReference type="SMR" id="Q9VFR0"/>
<dbReference type="BioGRID" id="66769">
    <property type="interactions" value="3"/>
</dbReference>
<dbReference type="FunCoup" id="Q9VFR0">
    <property type="interactions" value="2089"/>
</dbReference>
<dbReference type="IntAct" id="Q9VFR0">
    <property type="interactions" value="21"/>
</dbReference>
<dbReference type="STRING" id="7227.FBpp0082298"/>
<dbReference type="PaxDb" id="7227-FBpp0082298"/>
<dbReference type="EnsemblMetazoa" id="FBtr0082830">
    <property type="protein sequence ID" value="FBpp0082298"/>
    <property type="gene ID" value="FBgn0038183"/>
</dbReference>
<dbReference type="GeneID" id="41690"/>
<dbReference type="KEGG" id="dme:Dmel_CG9286"/>
<dbReference type="UCSC" id="CG9286-RA">
    <property type="organism name" value="d. melanogaster"/>
</dbReference>
<dbReference type="AGR" id="FB:FBgn0038183"/>
<dbReference type="FlyBase" id="FBgn0038183">
    <property type="gene designation" value="CG9286"/>
</dbReference>
<dbReference type="VEuPathDB" id="VectorBase:FBgn0038183"/>
<dbReference type="eggNOG" id="KOG3034">
    <property type="taxonomic scope" value="Eukaryota"/>
</dbReference>
<dbReference type="GeneTree" id="ENSGT00390000000696"/>
<dbReference type="HOGENOM" id="CLU_068770_1_1_1"/>
<dbReference type="InParanoid" id="Q9VFR0"/>
<dbReference type="OMA" id="VKFYRKE"/>
<dbReference type="OrthoDB" id="27543at2759"/>
<dbReference type="PhylomeDB" id="Q9VFR0"/>
<dbReference type="BioGRID-ORCS" id="41690">
    <property type="hits" value="0 hits in 1 CRISPR screen"/>
</dbReference>
<dbReference type="ChiTaRS" id="CG9286">
    <property type="organism name" value="fly"/>
</dbReference>
<dbReference type="GenomeRNAi" id="41690"/>
<dbReference type="PRO" id="PR:Q9VFR0"/>
<dbReference type="Proteomes" id="UP000000803">
    <property type="component" value="Chromosome 3R"/>
</dbReference>
<dbReference type="Bgee" id="FBgn0038183">
    <property type="expression patterns" value="Expressed in adult enteroendocrine precursor cell in adult midgut (Drosophila) and 78 other cell types or tissues"/>
</dbReference>
<dbReference type="GO" id="GO:0005634">
    <property type="term" value="C:nucleus"/>
    <property type="evidence" value="ECO:0000318"/>
    <property type="project" value="GO_Central"/>
</dbReference>
<dbReference type="GO" id="GO:0019887">
    <property type="term" value="F:protein kinase regulator activity"/>
    <property type="evidence" value="ECO:0000250"/>
    <property type="project" value="FlyBase"/>
</dbReference>
<dbReference type="InterPro" id="IPR025602">
    <property type="entry name" value="BCP1_family"/>
</dbReference>
<dbReference type="PANTHER" id="PTHR13261">
    <property type="entry name" value="BRCA2 AND CDKN1A INTERACTING PROTEIN"/>
    <property type="match status" value="1"/>
</dbReference>
<dbReference type="PANTHER" id="PTHR13261:SF0">
    <property type="entry name" value="BRCA2 AND CDKN1A-INTERACTING PROTEIN"/>
    <property type="match status" value="1"/>
</dbReference>
<dbReference type="Pfam" id="PF13862">
    <property type="entry name" value="BCCIP"/>
    <property type="match status" value="1"/>
</dbReference>
<dbReference type="PIRSF" id="PIRSF028983">
    <property type="entry name" value="BCP1"/>
    <property type="match status" value="1"/>
</dbReference>
<accession>Q9VFR0</accession>
<accession>Q8T9H9</accession>
<name>BCCIP_DROME</name>
<organism>
    <name type="scientific">Drosophila melanogaster</name>
    <name type="common">Fruit fly</name>
    <dbReference type="NCBI Taxonomy" id="7227"/>
    <lineage>
        <taxon>Eukaryota</taxon>
        <taxon>Metazoa</taxon>
        <taxon>Ecdysozoa</taxon>
        <taxon>Arthropoda</taxon>
        <taxon>Hexapoda</taxon>
        <taxon>Insecta</taxon>
        <taxon>Pterygota</taxon>
        <taxon>Neoptera</taxon>
        <taxon>Endopterygota</taxon>
        <taxon>Diptera</taxon>
        <taxon>Brachycera</taxon>
        <taxon>Muscomorpha</taxon>
        <taxon>Ephydroidea</taxon>
        <taxon>Drosophilidae</taxon>
        <taxon>Drosophila</taxon>
        <taxon>Sophophora</taxon>
    </lineage>
</organism>
<comment type="similarity">
    <text evidence="2">Belongs to the BCP1 family.</text>
</comment>
<protein>
    <recommendedName>
        <fullName>Protein BCCIP homolog</fullName>
    </recommendedName>
</protein>
<reference key="1">
    <citation type="journal article" date="2000" name="Science">
        <title>The genome sequence of Drosophila melanogaster.</title>
        <authorList>
            <person name="Adams M.D."/>
            <person name="Celniker S.E."/>
            <person name="Holt R.A."/>
            <person name="Evans C.A."/>
            <person name="Gocayne J.D."/>
            <person name="Amanatides P.G."/>
            <person name="Scherer S.E."/>
            <person name="Li P.W."/>
            <person name="Hoskins R.A."/>
            <person name="Galle R.F."/>
            <person name="George R.A."/>
            <person name="Lewis S.E."/>
            <person name="Richards S."/>
            <person name="Ashburner M."/>
            <person name="Henderson S.N."/>
            <person name="Sutton G.G."/>
            <person name="Wortman J.R."/>
            <person name="Yandell M.D."/>
            <person name="Zhang Q."/>
            <person name="Chen L.X."/>
            <person name="Brandon R.C."/>
            <person name="Rogers Y.-H.C."/>
            <person name="Blazej R.G."/>
            <person name="Champe M."/>
            <person name="Pfeiffer B.D."/>
            <person name="Wan K.H."/>
            <person name="Doyle C."/>
            <person name="Baxter E.G."/>
            <person name="Helt G."/>
            <person name="Nelson C.R."/>
            <person name="Miklos G.L.G."/>
            <person name="Abril J.F."/>
            <person name="Agbayani A."/>
            <person name="An H.-J."/>
            <person name="Andrews-Pfannkoch C."/>
            <person name="Baldwin D."/>
            <person name="Ballew R.M."/>
            <person name="Basu A."/>
            <person name="Baxendale J."/>
            <person name="Bayraktaroglu L."/>
            <person name="Beasley E.M."/>
            <person name="Beeson K.Y."/>
            <person name="Benos P.V."/>
            <person name="Berman B.P."/>
            <person name="Bhandari D."/>
            <person name="Bolshakov S."/>
            <person name="Borkova D."/>
            <person name="Botchan M.R."/>
            <person name="Bouck J."/>
            <person name="Brokstein P."/>
            <person name="Brottier P."/>
            <person name="Burtis K.C."/>
            <person name="Busam D.A."/>
            <person name="Butler H."/>
            <person name="Cadieu E."/>
            <person name="Center A."/>
            <person name="Chandra I."/>
            <person name="Cherry J.M."/>
            <person name="Cawley S."/>
            <person name="Dahlke C."/>
            <person name="Davenport L.B."/>
            <person name="Davies P."/>
            <person name="de Pablos B."/>
            <person name="Delcher A."/>
            <person name="Deng Z."/>
            <person name="Mays A.D."/>
            <person name="Dew I."/>
            <person name="Dietz S.M."/>
            <person name="Dodson K."/>
            <person name="Doup L.E."/>
            <person name="Downes M."/>
            <person name="Dugan-Rocha S."/>
            <person name="Dunkov B.C."/>
            <person name="Dunn P."/>
            <person name="Durbin K.J."/>
            <person name="Evangelista C.C."/>
            <person name="Ferraz C."/>
            <person name="Ferriera S."/>
            <person name="Fleischmann W."/>
            <person name="Fosler C."/>
            <person name="Gabrielian A.E."/>
            <person name="Garg N.S."/>
            <person name="Gelbart W.M."/>
            <person name="Glasser K."/>
            <person name="Glodek A."/>
            <person name="Gong F."/>
            <person name="Gorrell J.H."/>
            <person name="Gu Z."/>
            <person name="Guan P."/>
            <person name="Harris M."/>
            <person name="Harris N.L."/>
            <person name="Harvey D.A."/>
            <person name="Heiman T.J."/>
            <person name="Hernandez J.R."/>
            <person name="Houck J."/>
            <person name="Hostin D."/>
            <person name="Houston K.A."/>
            <person name="Howland T.J."/>
            <person name="Wei M.-H."/>
            <person name="Ibegwam C."/>
            <person name="Jalali M."/>
            <person name="Kalush F."/>
            <person name="Karpen G.H."/>
            <person name="Ke Z."/>
            <person name="Kennison J.A."/>
            <person name="Ketchum K.A."/>
            <person name="Kimmel B.E."/>
            <person name="Kodira C.D."/>
            <person name="Kraft C.L."/>
            <person name="Kravitz S."/>
            <person name="Kulp D."/>
            <person name="Lai Z."/>
            <person name="Lasko P."/>
            <person name="Lei Y."/>
            <person name="Levitsky A.A."/>
            <person name="Li J.H."/>
            <person name="Li Z."/>
            <person name="Liang Y."/>
            <person name="Lin X."/>
            <person name="Liu X."/>
            <person name="Mattei B."/>
            <person name="McIntosh T.C."/>
            <person name="McLeod M.P."/>
            <person name="McPherson D."/>
            <person name="Merkulov G."/>
            <person name="Milshina N.V."/>
            <person name="Mobarry C."/>
            <person name="Morris J."/>
            <person name="Moshrefi A."/>
            <person name="Mount S.M."/>
            <person name="Moy M."/>
            <person name="Murphy B."/>
            <person name="Murphy L."/>
            <person name="Muzny D.M."/>
            <person name="Nelson D.L."/>
            <person name="Nelson D.R."/>
            <person name="Nelson K.A."/>
            <person name="Nixon K."/>
            <person name="Nusskern D.R."/>
            <person name="Pacleb J.M."/>
            <person name="Palazzolo M."/>
            <person name="Pittman G.S."/>
            <person name="Pan S."/>
            <person name="Pollard J."/>
            <person name="Puri V."/>
            <person name="Reese M.G."/>
            <person name="Reinert K."/>
            <person name="Remington K."/>
            <person name="Saunders R.D.C."/>
            <person name="Scheeler F."/>
            <person name="Shen H."/>
            <person name="Shue B.C."/>
            <person name="Siden-Kiamos I."/>
            <person name="Simpson M."/>
            <person name="Skupski M.P."/>
            <person name="Smith T.J."/>
            <person name="Spier E."/>
            <person name="Spradling A.C."/>
            <person name="Stapleton M."/>
            <person name="Strong R."/>
            <person name="Sun E."/>
            <person name="Svirskas R."/>
            <person name="Tector C."/>
            <person name="Turner R."/>
            <person name="Venter E."/>
            <person name="Wang A.H."/>
            <person name="Wang X."/>
            <person name="Wang Z.-Y."/>
            <person name="Wassarman D.A."/>
            <person name="Weinstock G.M."/>
            <person name="Weissenbach J."/>
            <person name="Williams S.M."/>
            <person name="Woodage T."/>
            <person name="Worley K.C."/>
            <person name="Wu D."/>
            <person name="Yang S."/>
            <person name="Yao Q.A."/>
            <person name="Ye J."/>
            <person name="Yeh R.-F."/>
            <person name="Zaveri J.S."/>
            <person name="Zhan M."/>
            <person name="Zhang G."/>
            <person name="Zhao Q."/>
            <person name="Zheng L."/>
            <person name="Zheng X.H."/>
            <person name="Zhong F.N."/>
            <person name="Zhong W."/>
            <person name="Zhou X."/>
            <person name="Zhu S.C."/>
            <person name="Zhu X."/>
            <person name="Smith H.O."/>
            <person name="Gibbs R.A."/>
            <person name="Myers E.W."/>
            <person name="Rubin G.M."/>
            <person name="Venter J.C."/>
        </authorList>
    </citation>
    <scope>NUCLEOTIDE SEQUENCE [LARGE SCALE GENOMIC DNA]</scope>
    <source>
        <strain>Berkeley</strain>
    </source>
</reference>
<reference key="2">
    <citation type="journal article" date="2002" name="Genome Biol.">
        <title>Annotation of the Drosophila melanogaster euchromatic genome: a systematic review.</title>
        <authorList>
            <person name="Misra S."/>
            <person name="Crosby M.A."/>
            <person name="Mungall C.J."/>
            <person name="Matthews B.B."/>
            <person name="Campbell K.S."/>
            <person name="Hradecky P."/>
            <person name="Huang Y."/>
            <person name="Kaminker J.S."/>
            <person name="Millburn G.H."/>
            <person name="Prochnik S.E."/>
            <person name="Smith C.D."/>
            <person name="Tupy J.L."/>
            <person name="Whitfield E.J."/>
            <person name="Bayraktaroglu L."/>
            <person name="Berman B.P."/>
            <person name="Bettencourt B.R."/>
            <person name="Celniker S.E."/>
            <person name="de Grey A.D.N.J."/>
            <person name="Drysdale R.A."/>
            <person name="Harris N.L."/>
            <person name="Richter J."/>
            <person name="Russo S."/>
            <person name="Schroeder A.J."/>
            <person name="Shu S.Q."/>
            <person name="Stapleton M."/>
            <person name="Yamada C."/>
            <person name="Ashburner M."/>
            <person name="Gelbart W.M."/>
            <person name="Rubin G.M."/>
            <person name="Lewis S.E."/>
        </authorList>
    </citation>
    <scope>GENOME REANNOTATION</scope>
    <source>
        <strain>Berkeley</strain>
    </source>
</reference>
<reference key="3">
    <citation type="journal article" date="2002" name="Genome Biol.">
        <title>A Drosophila full-length cDNA resource.</title>
        <authorList>
            <person name="Stapleton M."/>
            <person name="Carlson J.W."/>
            <person name="Brokstein P."/>
            <person name="Yu C."/>
            <person name="Champe M."/>
            <person name="George R.A."/>
            <person name="Guarin H."/>
            <person name="Kronmiller B."/>
            <person name="Pacleb J.M."/>
            <person name="Park S."/>
            <person name="Wan K.H."/>
            <person name="Rubin G.M."/>
            <person name="Celniker S.E."/>
        </authorList>
    </citation>
    <scope>NUCLEOTIDE SEQUENCE [LARGE SCALE MRNA]</scope>
    <source>
        <strain>Berkeley</strain>
        <tissue>Ovary</tissue>
    </source>
</reference>
<gene>
    <name type="ORF">CG9286</name>
</gene>
<sequence>MSANKQKKLSTMEVDPNEDVSSSSEDDDDDEPHPDAYKGNEEVQIDFEGRAPVDPDAQGISQLLQRLFLRAHINCNQMADLIIAQNFIGSVICQCDDEGTESETEDDNMVEDGTIFGITSVLNLTAKKDQPSIAQLRTYILDRAKTHASPEVQQQLKEILDSEQRHVGFLINERFINIPAQISVPLLQSLQQEIEAAKAKKMKYDFGTLLLLVKFYRKESKKGKPGEDVYTNAEDELLSDRAKFSFEYSMASETDSGMSGDWLEGDAVMTPYRKLLVLEAKKLPQLIDDIQRFINGE</sequence>
<proteinExistence type="evidence at transcript level"/>
<feature type="chain" id="PRO_0000249692" description="Protein BCCIP homolog">
    <location>
        <begin position="1"/>
        <end position="297"/>
    </location>
</feature>
<feature type="region of interest" description="Disordered" evidence="1">
    <location>
        <begin position="1"/>
        <end position="40"/>
    </location>
</feature>
<feature type="sequence conflict" description="In Ref. 3; AAL39431." evidence="2" ref="3">
    <original>N</original>
    <variation>S</variation>
    <location>
        <position position="4"/>
    </location>
</feature>
<feature type="sequence conflict" description="In Ref. 3; AAL39431." evidence="2" ref="3">
    <original>S</original>
    <variation>F</variation>
    <location>
        <position position="23"/>
    </location>
</feature>
<feature type="sequence conflict" description="In Ref. 3; AAL39431." evidence="2" ref="3">
    <original>P</original>
    <variation>T</variation>
    <location>
        <position position="150"/>
    </location>
</feature>
<feature type="sequence conflict" description="In Ref. 3; AAL39431." evidence="2" ref="3">
    <original>K</original>
    <variation>N</variation>
    <location>
        <position position="243"/>
    </location>
</feature>
<keyword id="KW-1185">Reference proteome</keyword>
<evidence type="ECO:0000256" key="1">
    <source>
        <dbReference type="SAM" id="MobiDB-lite"/>
    </source>
</evidence>
<evidence type="ECO:0000305" key="2"/>